<keyword id="KW-0068">Autocatalytic cleavage</keyword>
<keyword id="KW-0227">DNA damage</keyword>
<keyword id="KW-0234">DNA repair</keyword>
<keyword id="KW-0235">DNA replication</keyword>
<keyword id="KW-0238">DNA-binding</keyword>
<keyword id="KW-0378">Hydrolase</keyword>
<keyword id="KW-0678">Repressor</keyword>
<keyword id="KW-0742">SOS response</keyword>
<keyword id="KW-0804">Transcription</keyword>
<keyword id="KW-0805">Transcription regulation</keyword>
<evidence type="ECO:0000255" key="1">
    <source>
        <dbReference type="HAMAP-Rule" id="MF_00015"/>
    </source>
</evidence>
<dbReference type="EC" id="3.4.21.88" evidence="1"/>
<dbReference type="EMBL" id="CP000422">
    <property type="protein sequence ID" value="ABJ67929.1"/>
    <property type="molecule type" value="Genomic_DNA"/>
</dbReference>
<dbReference type="RefSeq" id="WP_002833597.1">
    <property type="nucleotide sequence ID" value="NC_008525.1"/>
</dbReference>
<dbReference type="SMR" id="Q03FU3"/>
<dbReference type="STRING" id="278197.PEPE_0870"/>
<dbReference type="MEROPS" id="S24.001"/>
<dbReference type="GeneID" id="33062284"/>
<dbReference type="KEGG" id="ppe:PEPE_0870"/>
<dbReference type="eggNOG" id="COG1974">
    <property type="taxonomic scope" value="Bacteria"/>
</dbReference>
<dbReference type="HOGENOM" id="CLU_066192_45_1_9"/>
<dbReference type="OrthoDB" id="9802364at2"/>
<dbReference type="Proteomes" id="UP000000773">
    <property type="component" value="Chromosome"/>
</dbReference>
<dbReference type="GO" id="GO:0003677">
    <property type="term" value="F:DNA binding"/>
    <property type="evidence" value="ECO:0007669"/>
    <property type="project" value="UniProtKB-UniRule"/>
</dbReference>
<dbReference type="GO" id="GO:0004252">
    <property type="term" value="F:serine-type endopeptidase activity"/>
    <property type="evidence" value="ECO:0007669"/>
    <property type="project" value="UniProtKB-UniRule"/>
</dbReference>
<dbReference type="GO" id="GO:0006281">
    <property type="term" value="P:DNA repair"/>
    <property type="evidence" value="ECO:0007669"/>
    <property type="project" value="UniProtKB-UniRule"/>
</dbReference>
<dbReference type="GO" id="GO:0006260">
    <property type="term" value="P:DNA replication"/>
    <property type="evidence" value="ECO:0007669"/>
    <property type="project" value="UniProtKB-UniRule"/>
</dbReference>
<dbReference type="GO" id="GO:0045892">
    <property type="term" value="P:negative regulation of DNA-templated transcription"/>
    <property type="evidence" value="ECO:0007669"/>
    <property type="project" value="UniProtKB-UniRule"/>
</dbReference>
<dbReference type="GO" id="GO:0006508">
    <property type="term" value="P:proteolysis"/>
    <property type="evidence" value="ECO:0007669"/>
    <property type="project" value="InterPro"/>
</dbReference>
<dbReference type="GO" id="GO:0009432">
    <property type="term" value="P:SOS response"/>
    <property type="evidence" value="ECO:0007669"/>
    <property type="project" value="UniProtKB-UniRule"/>
</dbReference>
<dbReference type="CDD" id="cd06529">
    <property type="entry name" value="S24_LexA-like"/>
    <property type="match status" value="1"/>
</dbReference>
<dbReference type="FunFam" id="2.10.109.10:FF:000001">
    <property type="entry name" value="LexA repressor"/>
    <property type="match status" value="1"/>
</dbReference>
<dbReference type="Gene3D" id="2.10.109.10">
    <property type="entry name" value="Umud Fragment, subunit A"/>
    <property type="match status" value="1"/>
</dbReference>
<dbReference type="Gene3D" id="1.10.10.10">
    <property type="entry name" value="Winged helix-like DNA-binding domain superfamily/Winged helix DNA-binding domain"/>
    <property type="match status" value="1"/>
</dbReference>
<dbReference type="HAMAP" id="MF_00015">
    <property type="entry name" value="LexA"/>
    <property type="match status" value="1"/>
</dbReference>
<dbReference type="InterPro" id="IPR006200">
    <property type="entry name" value="LexA"/>
</dbReference>
<dbReference type="InterPro" id="IPR039418">
    <property type="entry name" value="LexA-like"/>
</dbReference>
<dbReference type="InterPro" id="IPR036286">
    <property type="entry name" value="LexA/Signal_pep-like_sf"/>
</dbReference>
<dbReference type="InterPro" id="IPR006199">
    <property type="entry name" value="LexA_DNA-bd_dom"/>
</dbReference>
<dbReference type="InterPro" id="IPR050077">
    <property type="entry name" value="LexA_repressor"/>
</dbReference>
<dbReference type="InterPro" id="IPR006197">
    <property type="entry name" value="Peptidase_S24_LexA"/>
</dbReference>
<dbReference type="InterPro" id="IPR015927">
    <property type="entry name" value="Peptidase_S24_S26A/B/C"/>
</dbReference>
<dbReference type="InterPro" id="IPR036388">
    <property type="entry name" value="WH-like_DNA-bd_sf"/>
</dbReference>
<dbReference type="InterPro" id="IPR036390">
    <property type="entry name" value="WH_DNA-bd_sf"/>
</dbReference>
<dbReference type="NCBIfam" id="TIGR00498">
    <property type="entry name" value="lexA"/>
    <property type="match status" value="1"/>
</dbReference>
<dbReference type="PANTHER" id="PTHR33516">
    <property type="entry name" value="LEXA REPRESSOR"/>
    <property type="match status" value="1"/>
</dbReference>
<dbReference type="PANTHER" id="PTHR33516:SF2">
    <property type="entry name" value="LEXA REPRESSOR-RELATED"/>
    <property type="match status" value="1"/>
</dbReference>
<dbReference type="Pfam" id="PF01726">
    <property type="entry name" value="LexA_DNA_bind"/>
    <property type="match status" value="1"/>
</dbReference>
<dbReference type="Pfam" id="PF00717">
    <property type="entry name" value="Peptidase_S24"/>
    <property type="match status" value="1"/>
</dbReference>
<dbReference type="PRINTS" id="PR00726">
    <property type="entry name" value="LEXASERPTASE"/>
</dbReference>
<dbReference type="SUPFAM" id="SSF51306">
    <property type="entry name" value="LexA/Signal peptidase"/>
    <property type="match status" value="1"/>
</dbReference>
<dbReference type="SUPFAM" id="SSF46785">
    <property type="entry name" value="Winged helix' DNA-binding domain"/>
    <property type="match status" value="1"/>
</dbReference>
<protein>
    <recommendedName>
        <fullName evidence="1">LexA repressor</fullName>
        <ecNumber evidence="1">3.4.21.88</ecNumber>
    </recommendedName>
</protein>
<accession>Q03FU3</accession>
<proteinExistence type="inferred from homology"/>
<gene>
    <name evidence="1" type="primary">lexA</name>
    <name type="ordered locus">PEPE_0870</name>
</gene>
<reference key="1">
    <citation type="journal article" date="2006" name="Proc. Natl. Acad. Sci. U.S.A.">
        <title>Comparative genomics of the lactic acid bacteria.</title>
        <authorList>
            <person name="Makarova K.S."/>
            <person name="Slesarev A."/>
            <person name="Wolf Y.I."/>
            <person name="Sorokin A."/>
            <person name="Mirkin B."/>
            <person name="Koonin E.V."/>
            <person name="Pavlov A."/>
            <person name="Pavlova N."/>
            <person name="Karamychev V."/>
            <person name="Polouchine N."/>
            <person name="Shakhova V."/>
            <person name="Grigoriev I."/>
            <person name="Lou Y."/>
            <person name="Rohksar D."/>
            <person name="Lucas S."/>
            <person name="Huang K."/>
            <person name="Goodstein D.M."/>
            <person name="Hawkins T."/>
            <person name="Plengvidhya V."/>
            <person name="Welker D."/>
            <person name="Hughes J."/>
            <person name="Goh Y."/>
            <person name="Benson A."/>
            <person name="Baldwin K."/>
            <person name="Lee J.-H."/>
            <person name="Diaz-Muniz I."/>
            <person name="Dosti B."/>
            <person name="Smeianov V."/>
            <person name="Wechter W."/>
            <person name="Barabote R."/>
            <person name="Lorca G."/>
            <person name="Altermann E."/>
            <person name="Barrangou R."/>
            <person name="Ganesan B."/>
            <person name="Xie Y."/>
            <person name="Rawsthorne H."/>
            <person name="Tamir D."/>
            <person name="Parker C."/>
            <person name="Breidt F."/>
            <person name="Broadbent J.R."/>
            <person name="Hutkins R."/>
            <person name="O'Sullivan D."/>
            <person name="Steele J."/>
            <person name="Unlu G."/>
            <person name="Saier M.H. Jr."/>
            <person name="Klaenhammer T."/>
            <person name="Richardson P."/>
            <person name="Kozyavkin S."/>
            <person name="Weimer B.C."/>
            <person name="Mills D.A."/>
        </authorList>
    </citation>
    <scope>NUCLEOTIDE SEQUENCE [LARGE SCALE GENOMIC DNA]</scope>
    <source>
        <strain>ATCC 25745 / CCUG 21536 / LMG 10740 / 183-1w</strain>
    </source>
</reference>
<comment type="function">
    <text evidence="1">Represses a number of genes involved in the response to DNA damage (SOS response), including recA and lexA. In the presence of single-stranded DNA, RecA interacts with LexA causing an autocatalytic cleavage which disrupts the DNA-binding part of LexA, leading to derepression of the SOS regulon and eventually DNA repair.</text>
</comment>
<comment type="catalytic activity">
    <reaction evidence="1">
        <text>Hydrolysis of Ala-|-Gly bond in repressor LexA.</text>
        <dbReference type="EC" id="3.4.21.88"/>
    </reaction>
</comment>
<comment type="subunit">
    <text evidence="1">Homodimer.</text>
</comment>
<comment type="similarity">
    <text evidence="1">Belongs to the peptidase S24 family.</text>
</comment>
<feature type="chain" id="PRO_1000001313" description="LexA repressor">
    <location>
        <begin position="1"/>
        <end position="209"/>
    </location>
</feature>
<feature type="DNA-binding region" description="H-T-H motif" evidence="1">
    <location>
        <begin position="29"/>
        <end position="49"/>
    </location>
</feature>
<feature type="active site" description="For autocatalytic cleavage activity" evidence="1">
    <location>
        <position position="130"/>
    </location>
</feature>
<feature type="active site" description="For autocatalytic cleavage activity" evidence="1">
    <location>
        <position position="168"/>
    </location>
</feature>
<feature type="site" description="Cleavage; by autolysis" evidence="1">
    <location>
        <begin position="94"/>
        <end position="95"/>
    </location>
</feature>
<sequence>MAKNISTKQLSVLEYIYKTVNAQGYPPTVREIGSAIGLSSTSTVHGHIDRLQKNGFLEKDPTKPRALEVTKLGLDALGVQDKNPTIPLLGVVTAGEPILAVEEATDFFPVPPEYENDSSNLFMLTIRGESMINAGILSGDQVIVRKQSTADNGTIVIAMTDENEATCKRFYRESDHIRLQPENDTMAPIILDNVTILGKVVGLFRDNIY</sequence>
<organism>
    <name type="scientific">Pediococcus pentosaceus (strain ATCC 25745 / CCUG 21536 / LMG 10740 / 183-1w)</name>
    <dbReference type="NCBI Taxonomy" id="278197"/>
    <lineage>
        <taxon>Bacteria</taxon>
        <taxon>Bacillati</taxon>
        <taxon>Bacillota</taxon>
        <taxon>Bacilli</taxon>
        <taxon>Lactobacillales</taxon>
        <taxon>Lactobacillaceae</taxon>
        <taxon>Pediococcus</taxon>
    </lineage>
</organism>
<name>LEXA_PEDPA</name>